<reference key="1">
    <citation type="journal article" date="1993" name="Gene">
        <title>Cloning, sequencing, and heterologous expression of a cellulase-encoding cDNA (cbh1) from Penicillium janthinellum.</title>
        <authorList>
            <person name="Koch A."/>
            <person name="Weigel C.T.O."/>
            <person name="Schulz G."/>
        </authorList>
    </citation>
    <scope>NUCLEOTIDE SEQUENCE [MRNA]</scope>
    <source>
        <strain>C41</strain>
    </source>
</reference>
<feature type="signal peptide" evidence="2">
    <location>
        <begin position="1"/>
        <end position="18"/>
    </location>
</feature>
<feature type="chain" id="PRO_0000007923" description="Exoglucanase 1">
    <location>
        <begin position="19"/>
        <end position="537"/>
    </location>
</feature>
<feature type="domain" description="CBM1" evidence="3">
    <location>
        <begin position="501"/>
        <end position="537"/>
    </location>
</feature>
<feature type="region of interest" description="Catalytic">
    <location>
        <begin position="19"/>
        <end position="453"/>
    </location>
</feature>
<feature type="region of interest" description="Linker">
    <location>
        <begin position="454"/>
        <end position="477"/>
    </location>
</feature>
<feature type="region of interest" description="Disordered" evidence="4">
    <location>
        <begin position="458"/>
        <end position="503"/>
    </location>
</feature>
<feature type="compositionally biased region" description="Low complexity" evidence="4">
    <location>
        <begin position="458"/>
        <end position="502"/>
    </location>
</feature>
<feature type="active site" description="Nucleophile" evidence="1">
    <location>
        <position position="235"/>
    </location>
</feature>
<feature type="active site" description="Proton donor" evidence="1">
    <location>
        <position position="240"/>
    </location>
</feature>
<feature type="glycosylation site" description="N-linked (GlcNAc...) asparagine" evidence="2">
    <location>
        <position position="136"/>
    </location>
</feature>
<feature type="glycosylation site" description="N-linked (GlcNAc...) asparagine" evidence="2">
    <location>
        <position position="414"/>
    </location>
</feature>
<feature type="glycosylation site" description="N-linked (GlcNAc...) asparagine" evidence="2">
    <location>
        <position position="456"/>
    </location>
</feature>
<feature type="disulfide bond" evidence="1">
    <location>
        <begin position="509"/>
        <end position="526"/>
    </location>
</feature>
<feature type="disulfide bond" evidence="1">
    <location>
        <begin position="520"/>
        <end position="536"/>
    </location>
</feature>
<dbReference type="EC" id="3.2.1.91"/>
<dbReference type="EMBL" id="X59054">
    <property type="protein sequence ID" value="CAA41780.1"/>
    <property type="molecule type" value="mRNA"/>
</dbReference>
<dbReference type="PIR" id="JU0150">
    <property type="entry name" value="JU0150"/>
</dbReference>
<dbReference type="CAZy" id="CBM1">
    <property type="family name" value="Carbohydrate-Binding Module Family 1"/>
</dbReference>
<dbReference type="CAZy" id="GH7">
    <property type="family name" value="Glycoside Hydrolase Family 7"/>
</dbReference>
<dbReference type="GlyCosmos" id="Q06886">
    <property type="glycosylation" value="3 sites, No reported glycans"/>
</dbReference>
<dbReference type="GO" id="GO:0005576">
    <property type="term" value="C:extracellular region"/>
    <property type="evidence" value="ECO:0007669"/>
    <property type="project" value="UniProtKB-SubCell"/>
</dbReference>
<dbReference type="GO" id="GO:0016162">
    <property type="term" value="F:cellulose 1,4-beta-cellobiosidase activity"/>
    <property type="evidence" value="ECO:0007669"/>
    <property type="project" value="UniProtKB-EC"/>
</dbReference>
<dbReference type="GO" id="GO:0030248">
    <property type="term" value="F:cellulose binding"/>
    <property type="evidence" value="ECO:0007669"/>
    <property type="project" value="InterPro"/>
</dbReference>
<dbReference type="GO" id="GO:0030245">
    <property type="term" value="P:cellulose catabolic process"/>
    <property type="evidence" value="ECO:0007669"/>
    <property type="project" value="UniProtKB-KW"/>
</dbReference>
<dbReference type="CDD" id="cd07999">
    <property type="entry name" value="GH7_CBH_EG"/>
    <property type="match status" value="1"/>
</dbReference>
<dbReference type="FunFam" id="2.70.100.10:FF:000001">
    <property type="entry name" value="Glucanase"/>
    <property type="match status" value="1"/>
</dbReference>
<dbReference type="Gene3D" id="2.70.100.10">
    <property type="entry name" value="Glycoside hydrolase, family 7, domain"/>
    <property type="match status" value="1"/>
</dbReference>
<dbReference type="InterPro" id="IPR035971">
    <property type="entry name" value="CBD_sf"/>
</dbReference>
<dbReference type="InterPro" id="IPR000254">
    <property type="entry name" value="Cellulose-bd_dom_fun"/>
</dbReference>
<dbReference type="InterPro" id="IPR013320">
    <property type="entry name" value="ConA-like_dom_sf"/>
</dbReference>
<dbReference type="InterPro" id="IPR001722">
    <property type="entry name" value="Glyco_hydro_7"/>
</dbReference>
<dbReference type="InterPro" id="IPR037019">
    <property type="entry name" value="Glyco_hydro_7_sf"/>
</dbReference>
<dbReference type="PANTHER" id="PTHR33753">
    <property type="entry name" value="1,4-BETA-D-GLUCAN CELLOBIOHYDROLASE B"/>
    <property type="match status" value="1"/>
</dbReference>
<dbReference type="PANTHER" id="PTHR33753:SF2">
    <property type="entry name" value="GLYCOSIDE HYDROLASE FAMILY 7 PROTEIN"/>
    <property type="match status" value="1"/>
</dbReference>
<dbReference type="Pfam" id="PF00734">
    <property type="entry name" value="CBM_1"/>
    <property type="match status" value="1"/>
</dbReference>
<dbReference type="Pfam" id="PF00840">
    <property type="entry name" value="Glyco_hydro_7"/>
    <property type="match status" value="1"/>
</dbReference>
<dbReference type="PRINTS" id="PR00734">
    <property type="entry name" value="GLHYDRLASE7"/>
</dbReference>
<dbReference type="SMART" id="SM00236">
    <property type="entry name" value="fCBD"/>
    <property type="match status" value="1"/>
</dbReference>
<dbReference type="SUPFAM" id="SSF57180">
    <property type="entry name" value="Cellulose-binding domain"/>
    <property type="match status" value="1"/>
</dbReference>
<dbReference type="SUPFAM" id="SSF49899">
    <property type="entry name" value="Concanavalin A-like lectins/glucanases"/>
    <property type="match status" value="1"/>
</dbReference>
<dbReference type="PROSITE" id="PS00562">
    <property type="entry name" value="CBM1_1"/>
    <property type="match status" value="1"/>
</dbReference>
<dbReference type="PROSITE" id="PS51164">
    <property type="entry name" value="CBM1_2"/>
    <property type="match status" value="1"/>
</dbReference>
<accession>Q06886</accession>
<sequence>MKGSISYQIYKGALLLSALLNSVSAQQVGTLTAETHPALTWSKCTAGXCSQVSGSVVIDANWPXVHSTSGSTNCYTGNTWDATLCPDDVTCAANCAVDGARRQHLRVTTSGNSLRINFVTTASQKNIGSRLYLLENDTTYQKFNLLNQEFTFDVDVSNLPCGLNGALYFVDMDADGGMAKYPTNKAGAKYGTGYCDSQCPRDLKFINGQANVDGWTPSKNDVNSGIGNHGSCCAEMDIWEANSISNAVTPHPCDTPSQTMCTGQRCGGTYSTDRYGGTCDPDGCDFNPYRMGVTNFYGPGETIDTKSPFTVVTQFLTNDGTSTGTLSEIKRFYVQGGKVIGNPQSTIVGVSGNSITDSWCNAQKSAFGDTNEFSKHGGMAGMGAGLADGMVLVMSLWDDHASDMLWLDSTYPTNATSTTPGAKRGTCDISRRPNTVESTYPNAYVIYSNIKTGPLNSTFTGGTTSSSSTTTTTSKSTSTSSSSKTTTTVTTTTTSSGSSGTGARDWAQCGGNGWTGPTTCVSPYTCTKQNDWYSQCL</sequence>
<proteinExistence type="evidence at transcript level"/>
<comment type="catalytic activity">
    <reaction>
        <text>Hydrolysis of (1-&gt;4)-beta-D-glucosidic linkages in cellulose and cellotetraose, releasing cellobiose from the non-reducing ends of the chains.</text>
        <dbReference type="EC" id="3.2.1.91"/>
    </reaction>
</comment>
<comment type="subcellular location">
    <subcellularLocation>
        <location>Secreted</location>
    </subcellularLocation>
</comment>
<comment type="similarity">
    <text evidence="5">Belongs to the glycosyl hydrolase 7 (cellulase C) family.</text>
</comment>
<keyword id="KW-0119">Carbohydrate metabolism</keyword>
<keyword id="KW-0136">Cellulose degradation</keyword>
<keyword id="KW-1015">Disulfide bond</keyword>
<keyword id="KW-0325">Glycoprotein</keyword>
<keyword id="KW-0326">Glycosidase</keyword>
<keyword id="KW-0378">Hydrolase</keyword>
<keyword id="KW-0624">Polysaccharide degradation</keyword>
<keyword id="KW-0964">Secreted</keyword>
<keyword id="KW-0732">Signal</keyword>
<protein>
    <recommendedName>
        <fullName>Exoglucanase 1</fullName>
        <ecNumber>3.2.1.91</ecNumber>
    </recommendedName>
    <alternativeName>
        <fullName>1,4-beta-cellobiohydrolase</fullName>
    </alternativeName>
    <alternativeName>
        <fullName>Exocellobiohydrolase I</fullName>
    </alternativeName>
    <alternativeName>
        <fullName>Exoglucanase I</fullName>
    </alternativeName>
</protein>
<name>GUX1_PENJA</name>
<gene>
    <name type="primary">cbh1</name>
</gene>
<evidence type="ECO:0000250" key="1"/>
<evidence type="ECO:0000255" key="2"/>
<evidence type="ECO:0000255" key="3">
    <source>
        <dbReference type="PROSITE-ProRule" id="PRU00597"/>
    </source>
</evidence>
<evidence type="ECO:0000256" key="4">
    <source>
        <dbReference type="SAM" id="MobiDB-lite"/>
    </source>
</evidence>
<evidence type="ECO:0000305" key="5"/>
<organism>
    <name type="scientific">Penicillium janthinellum</name>
    <name type="common">Penicillium vitale</name>
    <dbReference type="NCBI Taxonomy" id="5079"/>
    <lineage>
        <taxon>Eukaryota</taxon>
        <taxon>Fungi</taxon>
        <taxon>Dikarya</taxon>
        <taxon>Ascomycota</taxon>
        <taxon>Pezizomycotina</taxon>
        <taxon>Eurotiomycetes</taxon>
        <taxon>Eurotiomycetidae</taxon>
        <taxon>Eurotiales</taxon>
        <taxon>Aspergillaceae</taxon>
        <taxon>Penicillium</taxon>
    </lineage>
</organism>